<evidence type="ECO:0000250" key="1"/>
<evidence type="ECO:0000255" key="2">
    <source>
        <dbReference type="PROSITE-ProRule" id="PRU10001"/>
    </source>
</evidence>
<evidence type="ECO:0000305" key="3"/>
<sequence>MKLKGEAVLITGGASGLGRALVDRFVAEAKVAVLDKSAERLAELETDLGDNVLGIVGDVRSLEDQKQAASRCVARFGKIDTLIPNAGIWDYSTALVDLPEESLDAAFDEVFHINVKGYIHAVKALPALVASRGNVIFTISNAGFYPNGGGPLYTAAKQAIVGLVRELAFELAPYVRVNGVGPGGMNSDMRGPSSLGMGSKAISTVPLADMLKSVLPIGRMPEVEEYTGAYVFFATRGDAAPASGALVNYDGGLGVRGFFSGAGGNDLLEQLNIHP</sequence>
<gene>
    <name type="primary">bphB</name>
</gene>
<comment type="catalytic activity">
    <reaction>
        <text>(2R,3S)-3-phenylcyclohexa-3,5-diene-1,2-diol + NAD(+) = biphenyl-2,3-diol + NADH + H(+)</text>
        <dbReference type="Rhea" id="RHEA:17033"/>
        <dbReference type="ChEBI" id="CHEBI:15378"/>
        <dbReference type="ChEBI" id="CHEBI:16205"/>
        <dbReference type="ChEBI" id="CHEBI:32922"/>
        <dbReference type="ChEBI" id="CHEBI:57540"/>
        <dbReference type="ChEBI" id="CHEBI:57945"/>
        <dbReference type="EC" id="1.3.1.56"/>
    </reaction>
</comment>
<comment type="pathway">
    <text>Xenobiotic degradation; biphenyl degradation; 2-hydroxy-2,4-pentadienoate and benzoate from biphenyl: step 2/4.</text>
</comment>
<comment type="similarity">
    <text evidence="3">Belongs to the short-chain dehydrogenases/reductases (SDR) family.</text>
</comment>
<comment type="sequence caution" evidence="3">
    <conflict type="erroneous initiation">
        <sequence resource="EMBL-CDS" id="AAA25752"/>
    </conflict>
</comment>
<dbReference type="EC" id="1.3.1.56"/>
<dbReference type="EMBL" id="M15333">
    <property type="protein sequence ID" value="AAA25752.1"/>
    <property type="status" value="ALT_INIT"/>
    <property type="molecule type" value="Genomic_DNA"/>
</dbReference>
<dbReference type="SMR" id="P08694"/>
<dbReference type="STRING" id="1149133.ppKF707_3401"/>
<dbReference type="UniPathway" id="UPA00155">
    <property type="reaction ID" value="UER00251"/>
</dbReference>
<dbReference type="GO" id="GO:0018509">
    <property type="term" value="F:cis-2,3-dihydrobiphenyl-2,3-diol dehydrogenase activity"/>
    <property type="evidence" value="ECO:0007669"/>
    <property type="project" value="UniProtKB-EC"/>
</dbReference>
<dbReference type="GO" id="GO:0050664">
    <property type="term" value="F:oxidoreductase activity, acting on NAD(P)H, oxygen as acceptor"/>
    <property type="evidence" value="ECO:0007669"/>
    <property type="project" value="TreeGrafter"/>
</dbReference>
<dbReference type="GO" id="GO:0009056">
    <property type="term" value="P:catabolic process"/>
    <property type="evidence" value="ECO:0007669"/>
    <property type="project" value="UniProtKB-KW"/>
</dbReference>
<dbReference type="CDD" id="cd05348">
    <property type="entry name" value="BphB-like_SDR_c"/>
    <property type="match status" value="1"/>
</dbReference>
<dbReference type="Gene3D" id="3.40.50.720">
    <property type="entry name" value="NAD(P)-binding Rossmann-like Domain"/>
    <property type="match status" value="1"/>
</dbReference>
<dbReference type="InterPro" id="IPR047950">
    <property type="entry name" value="BphB-like_SDR"/>
</dbReference>
<dbReference type="InterPro" id="IPR017711">
    <property type="entry name" value="BphB_TodD"/>
</dbReference>
<dbReference type="InterPro" id="IPR036291">
    <property type="entry name" value="NAD(P)-bd_dom_sf"/>
</dbReference>
<dbReference type="InterPro" id="IPR020904">
    <property type="entry name" value="Sc_DH/Rdtase_CS"/>
</dbReference>
<dbReference type="InterPro" id="IPR002347">
    <property type="entry name" value="SDR_fam"/>
</dbReference>
<dbReference type="NCBIfam" id="TIGR03325">
    <property type="entry name" value="BphB_TodD"/>
    <property type="match status" value="1"/>
</dbReference>
<dbReference type="NCBIfam" id="NF004849">
    <property type="entry name" value="PRK06200.1"/>
    <property type="match status" value="1"/>
</dbReference>
<dbReference type="PANTHER" id="PTHR43008">
    <property type="entry name" value="BENZIL REDUCTASE"/>
    <property type="match status" value="1"/>
</dbReference>
<dbReference type="PANTHER" id="PTHR43008:SF4">
    <property type="entry name" value="CHAIN DEHYDROGENASE, PUTATIVE (AFU_ORTHOLOGUE AFUA_4G08710)-RELATED"/>
    <property type="match status" value="1"/>
</dbReference>
<dbReference type="Pfam" id="PF00106">
    <property type="entry name" value="adh_short"/>
    <property type="match status" value="1"/>
</dbReference>
<dbReference type="PRINTS" id="PR00081">
    <property type="entry name" value="GDHRDH"/>
</dbReference>
<dbReference type="PRINTS" id="PR00080">
    <property type="entry name" value="SDRFAMILY"/>
</dbReference>
<dbReference type="SUPFAM" id="SSF51735">
    <property type="entry name" value="NAD(P)-binding Rossmann-fold domains"/>
    <property type="match status" value="1"/>
</dbReference>
<dbReference type="PROSITE" id="PS00061">
    <property type="entry name" value="ADH_SHORT"/>
    <property type="match status" value="1"/>
</dbReference>
<organism>
    <name type="scientific">Metapseudomonas furukawaii</name>
    <name type="common">Pseudomonas furukawaii</name>
    <dbReference type="NCBI Taxonomy" id="1149133"/>
    <lineage>
        <taxon>Bacteria</taxon>
        <taxon>Pseudomonadati</taxon>
        <taxon>Pseudomonadota</taxon>
        <taxon>Gammaproteobacteria</taxon>
        <taxon>Pseudomonadales</taxon>
        <taxon>Pseudomonadaceae</taxon>
        <taxon>Metapseudomonas</taxon>
    </lineage>
</organism>
<feature type="chain" id="PRO_0000054533" description="Cis-2,3-dihydrobiphenyl-2,3-diol dehydrogenase">
    <location>
        <begin position="1"/>
        <end position="275"/>
    </location>
</feature>
<feature type="active site" description="Proton acceptor" evidence="2">
    <location>
        <position position="153"/>
    </location>
</feature>
<feature type="binding site" evidence="1">
    <location>
        <begin position="9"/>
        <end position="33"/>
    </location>
    <ligand>
        <name>NAD(+)</name>
        <dbReference type="ChEBI" id="CHEBI:57540"/>
    </ligand>
</feature>
<feature type="binding site" evidence="1">
    <location>
        <position position="140"/>
    </location>
    <ligand>
        <name>substrate</name>
    </ligand>
</feature>
<keyword id="KW-0058">Aromatic hydrocarbons catabolism</keyword>
<keyword id="KW-0520">NAD</keyword>
<keyword id="KW-0560">Oxidoreductase</keyword>
<accession>P08694</accession>
<proteinExistence type="inferred from homology"/>
<name>BPHB_METFU</name>
<reference key="1">
    <citation type="journal article" date="1987" name="J. Bacteriol.">
        <title>Nucleotide sequence of the 2,3-dihydroxybiphenyl dioxygenase gene of Pseudomonas pseudoalcaligenes.</title>
        <authorList>
            <person name="Furukawa K."/>
            <person name="Arimura N."/>
            <person name="Miyazaki T."/>
        </authorList>
    </citation>
    <scope>NUCLEOTIDE SEQUENCE [GENOMIC DNA]</scope>
    <source>
        <strain>DSM 10086 / NBRC 110670 / KF707</strain>
    </source>
</reference>
<protein>
    <recommendedName>
        <fullName>Cis-2,3-dihydrobiphenyl-2,3-diol dehydrogenase</fullName>
        <ecNumber>1.3.1.56</ecNumber>
    </recommendedName>
    <alternativeName>
        <fullName>2,3-dihydro-2,3-dihydroxybiphenyl dehydrogenase</fullName>
    </alternativeName>
    <alternativeName>
        <fullName>2,3-dihydroxy-4-phenylhexa-4,6-diene dehydrogenase</fullName>
    </alternativeName>
    <alternativeName>
        <fullName>Biphenyl-2,3-dihydro-2,3-diol dehydrogenase</fullName>
    </alternativeName>
    <alternativeName>
        <fullName>Biphenyl-cis-diol dehydrogenase</fullName>
    </alternativeName>
</protein>